<reference key="1">
    <citation type="journal article" date="1995" name="Dev. Biol.">
        <title>Transcriptional activation of the matrix metalloproteinase gene stromelysin-3 coincides with thyroid hormone-induced cell death during frog metamorphosis.</title>
        <authorList>
            <person name="Patterton D."/>
            <person name="Hayes W.P."/>
            <person name="Shi Y.B."/>
        </authorList>
    </citation>
    <scope>NUCLEOTIDE SEQUENCE [MRNA]</scope>
    <scope>ZINC-BINDING SITES CYS-65; HIS-203; HIS-207 AND HIS-213</scope>
    <source>
        <tissue>Intestine</tissue>
    </source>
</reference>
<proteinExistence type="evidence at protein level"/>
<evidence type="ECO:0000250" key="1"/>
<evidence type="ECO:0000255" key="2"/>
<evidence type="ECO:0000255" key="3">
    <source>
        <dbReference type="PROSITE-ProRule" id="PRU10095"/>
    </source>
</evidence>
<evidence type="ECO:0000256" key="4">
    <source>
        <dbReference type="SAM" id="MobiDB-lite"/>
    </source>
</evidence>
<evidence type="ECO:0000305" key="5"/>
<sequence>MHLLILLPALCVLGAHSAPLSYTYLQHRIQEKPQKDHGRLQFNSLHYPHIKGLLNAHGSWNPPRCGVPDIPAPPDSSSGRNRQKRFVLSGGRWDKTNLTYKIIRFPWQLSKVKVRRTIAEALKVWSEVTPLTFTEVHEGRSDIIIDFTRYWHGDNLPFDGPGGILAHAFFPKTHREGDVHFDYDEAWTIGNNIGTDLLQVAAHEFGHMLGLQHSSISKSLMSPFYTFRYPLSLSADDKHGIQFLYGAPRPPTPSPTPRVEVNQVENESNEIPAAEPDACKTNFDAVSTIRGELFFFKSGYVWRLRGGKLQNGYPALASRHWRGIPDTVDAAFEDSVGNIWFFYGSQFWVFDGKLQASGPFPITDIGISVTQIQAAFVWGTEKNKKTYLFRGGEYWRFNPETRRVESRHSRRIGDWRGVPKGIDAAFQDEQGYAYFVKGRQYWKFDPFKVRVMDGYPHLISQDFFNCQASSTFVNSLR</sequence>
<accession>Q11005</accession>
<organism>
    <name type="scientific">Xenopus laevis</name>
    <name type="common">African clawed frog</name>
    <dbReference type="NCBI Taxonomy" id="8355"/>
    <lineage>
        <taxon>Eukaryota</taxon>
        <taxon>Metazoa</taxon>
        <taxon>Chordata</taxon>
        <taxon>Craniata</taxon>
        <taxon>Vertebrata</taxon>
        <taxon>Euteleostomi</taxon>
        <taxon>Amphibia</taxon>
        <taxon>Batrachia</taxon>
        <taxon>Anura</taxon>
        <taxon>Pipoidea</taxon>
        <taxon>Pipidae</taxon>
        <taxon>Xenopodinae</taxon>
        <taxon>Xenopus</taxon>
        <taxon>Xenopus</taxon>
    </lineage>
</organism>
<name>MMP11_XENLA</name>
<protein>
    <recommendedName>
        <fullName>Stromelysin-3</fullName>
        <shortName>ST3</shortName>
        <ecNumber>3.4.24.-</ecNumber>
    </recommendedName>
    <alternativeName>
        <fullName>Matrix metalloproteinase-11</fullName>
        <shortName>MMP-11</shortName>
    </alternativeName>
</protein>
<comment type="function">
    <text>May be involved in the modification of the extracellular matrix during metamorphic apoptosis.</text>
</comment>
<comment type="cofactor">
    <cofactor evidence="1">
        <name>Ca(2+)</name>
        <dbReference type="ChEBI" id="CHEBI:29108"/>
    </cofactor>
    <text evidence="1">Binds 1 Ca(2+) ion per subunit.</text>
</comment>
<comment type="cofactor">
    <cofactor evidence="1">
        <name>Zn(2+)</name>
        <dbReference type="ChEBI" id="CHEBI:29105"/>
    </cofactor>
    <text evidence="1">Binds 2 Zn(2+) ions per subunit.</text>
</comment>
<comment type="subcellular location">
    <subcellularLocation>
        <location evidence="5">Secreted</location>
        <location evidence="5">Extracellular space</location>
        <location evidence="5">Extracellular matrix</location>
    </subcellularLocation>
</comment>
<comment type="tissue specificity">
    <text>Expressed in fibroblast cells that are activated by thyroid hormone. High levels in resorbing tail.</text>
</comment>
<comment type="similarity">
    <text evidence="5">Belongs to the peptidase M10A family.</text>
</comment>
<dbReference type="EC" id="3.4.24.-"/>
<dbReference type="EMBL" id="Z27093">
    <property type="protein sequence ID" value="CAA81616.1"/>
    <property type="molecule type" value="mRNA"/>
</dbReference>
<dbReference type="PIR" id="I51645">
    <property type="entry name" value="I51645"/>
</dbReference>
<dbReference type="RefSeq" id="NP_001079811.1">
    <property type="nucleotide sequence ID" value="NM_001086342.1"/>
</dbReference>
<dbReference type="SMR" id="Q11005"/>
<dbReference type="MEROPS" id="M10.007"/>
<dbReference type="DNASU" id="379501"/>
<dbReference type="GeneID" id="379501"/>
<dbReference type="KEGG" id="xla:379501"/>
<dbReference type="AGR" id="Xenbase:XB-GENE-865255"/>
<dbReference type="CTD" id="379501"/>
<dbReference type="Xenbase" id="XB-GENE-865255">
    <property type="gene designation" value="mmp11.L"/>
</dbReference>
<dbReference type="OrthoDB" id="65569at2759"/>
<dbReference type="BRENDA" id="3.4.24.B3">
    <property type="organism ID" value="6725"/>
</dbReference>
<dbReference type="Proteomes" id="UP000186698">
    <property type="component" value="Chromosome 1L"/>
</dbReference>
<dbReference type="Bgee" id="379501">
    <property type="expression patterns" value="Expressed in internal ear and 3 other cell types or tissues"/>
</dbReference>
<dbReference type="GO" id="GO:0031012">
    <property type="term" value="C:extracellular matrix"/>
    <property type="evidence" value="ECO:0007669"/>
    <property type="project" value="InterPro"/>
</dbReference>
<dbReference type="GO" id="GO:0005615">
    <property type="term" value="C:extracellular space"/>
    <property type="evidence" value="ECO:0000318"/>
    <property type="project" value="GO_Central"/>
</dbReference>
<dbReference type="GO" id="GO:0004222">
    <property type="term" value="F:metalloendopeptidase activity"/>
    <property type="evidence" value="ECO:0000318"/>
    <property type="project" value="GO_Central"/>
</dbReference>
<dbReference type="GO" id="GO:0008270">
    <property type="term" value="F:zinc ion binding"/>
    <property type="evidence" value="ECO:0007669"/>
    <property type="project" value="InterPro"/>
</dbReference>
<dbReference type="GO" id="GO:0030574">
    <property type="term" value="P:collagen catabolic process"/>
    <property type="evidence" value="ECO:0000318"/>
    <property type="project" value="GO_Central"/>
</dbReference>
<dbReference type="GO" id="GO:0030198">
    <property type="term" value="P:extracellular matrix organization"/>
    <property type="evidence" value="ECO:0000318"/>
    <property type="project" value="GO_Central"/>
</dbReference>
<dbReference type="GO" id="GO:0006508">
    <property type="term" value="P:proteolysis"/>
    <property type="evidence" value="ECO:0007669"/>
    <property type="project" value="UniProtKB-KW"/>
</dbReference>
<dbReference type="CDD" id="cd00094">
    <property type="entry name" value="HX"/>
    <property type="match status" value="1"/>
</dbReference>
<dbReference type="CDD" id="cd04278">
    <property type="entry name" value="ZnMc_MMP"/>
    <property type="match status" value="1"/>
</dbReference>
<dbReference type="FunFam" id="2.110.10.10:FF:000005">
    <property type="entry name" value="Stromelysin-3 preproprotein"/>
    <property type="match status" value="1"/>
</dbReference>
<dbReference type="FunFam" id="3.40.390.10:FF:000020">
    <property type="entry name" value="Stromelysin-3 preproprotein"/>
    <property type="match status" value="1"/>
</dbReference>
<dbReference type="Gene3D" id="3.40.390.10">
    <property type="entry name" value="Collagenase (Catalytic Domain)"/>
    <property type="match status" value="1"/>
</dbReference>
<dbReference type="Gene3D" id="2.110.10.10">
    <property type="entry name" value="Hemopexin-like domain"/>
    <property type="match status" value="1"/>
</dbReference>
<dbReference type="InterPro" id="IPR000585">
    <property type="entry name" value="Hemopexin-like_dom"/>
</dbReference>
<dbReference type="InterPro" id="IPR036375">
    <property type="entry name" value="Hemopexin-like_dom_sf"/>
</dbReference>
<dbReference type="InterPro" id="IPR018487">
    <property type="entry name" value="Hemopexin-like_repeat"/>
</dbReference>
<dbReference type="InterPro" id="IPR018486">
    <property type="entry name" value="Hemopexin_CS"/>
</dbReference>
<dbReference type="InterPro" id="IPR033739">
    <property type="entry name" value="M10A_MMP"/>
</dbReference>
<dbReference type="InterPro" id="IPR024079">
    <property type="entry name" value="MetalloPept_cat_dom_sf"/>
</dbReference>
<dbReference type="InterPro" id="IPR001818">
    <property type="entry name" value="Pept_M10_metallopeptidase"/>
</dbReference>
<dbReference type="InterPro" id="IPR021190">
    <property type="entry name" value="Pept_M10A"/>
</dbReference>
<dbReference type="InterPro" id="IPR021158">
    <property type="entry name" value="Pept_M10A_Zn_BS"/>
</dbReference>
<dbReference type="InterPro" id="IPR006026">
    <property type="entry name" value="Peptidase_Metallo"/>
</dbReference>
<dbReference type="PANTHER" id="PTHR10201">
    <property type="entry name" value="MATRIX METALLOPROTEINASE"/>
    <property type="match status" value="1"/>
</dbReference>
<dbReference type="PANTHER" id="PTHR10201:SF20">
    <property type="entry name" value="STROMELYSIN-3"/>
    <property type="match status" value="1"/>
</dbReference>
<dbReference type="Pfam" id="PF00045">
    <property type="entry name" value="Hemopexin"/>
    <property type="match status" value="4"/>
</dbReference>
<dbReference type="Pfam" id="PF00413">
    <property type="entry name" value="Peptidase_M10"/>
    <property type="match status" value="1"/>
</dbReference>
<dbReference type="PIRSF" id="PIRSF001191">
    <property type="entry name" value="Peptidase_M10A_matrix"/>
    <property type="match status" value="1"/>
</dbReference>
<dbReference type="PRINTS" id="PR00138">
    <property type="entry name" value="MATRIXIN"/>
</dbReference>
<dbReference type="SMART" id="SM00120">
    <property type="entry name" value="HX"/>
    <property type="match status" value="4"/>
</dbReference>
<dbReference type="SMART" id="SM00235">
    <property type="entry name" value="ZnMc"/>
    <property type="match status" value="1"/>
</dbReference>
<dbReference type="SUPFAM" id="SSF50923">
    <property type="entry name" value="Hemopexin-like domain"/>
    <property type="match status" value="1"/>
</dbReference>
<dbReference type="SUPFAM" id="SSF55486">
    <property type="entry name" value="Metalloproteases ('zincins'), catalytic domain"/>
    <property type="match status" value="1"/>
</dbReference>
<dbReference type="PROSITE" id="PS00546">
    <property type="entry name" value="CYSTEINE_SWITCH"/>
    <property type="match status" value="1"/>
</dbReference>
<dbReference type="PROSITE" id="PS00024">
    <property type="entry name" value="HEMOPEXIN"/>
    <property type="match status" value="1"/>
</dbReference>
<dbReference type="PROSITE" id="PS51642">
    <property type="entry name" value="HEMOPEXIN_2"/>
    <property type="match status" value="4"/>
</dbReference>
<dbReference type="PROSITE" id="PS00142">
    <property type="entry name" value="ZINC_PROTEASE"/>
    <property type="match status" value="1"/>
</dbReference>
<gene>
    <name type="primary">mmp11</name>
</gene>
<keyword id="KW-0106">Calcium</keyword>
<keyword id="KW-0165">Cleavage on pair of basic residues</keyword>
<keyword id="KW-0177">Collagen degradation</keyword>
<keyword id="KW-1015">Disulfide bond</keyword>
<keyword id="KW-0272">Extracellular matrix</keyword>
<keyword id="KW-0378">Hydrolase</keyword>
<keyword id="KW-0479">Metal-binding</keyword>
<keyword id="KW-0482">Metalloprotease</keyword>
<keyword id="KW-0645">Protease</keyword>
<keyword id="KW-1185">Reference proteome</keyword>
<keyword id="KW-0677">Repeat</keyword>
<keyword id="KW-0964">Secreted</keyword>
<keyword id="KW-0732">Signal</keyword>
<keyword id="KW-0862">Zinc</keyword>
<keyword id="KW-0865">Zymogen</keyword>
<feature type="signal peptide" evidence="2">
    <location>
        <begin position="1"/>
        <end position="17"/>
    </location>
</feature>
<feature type="propeptide" id="PRO_0000028774" description="Activation peptide" evidence="1">
    <location>
        <begin position="18"/>
        <end position="85"/>
    </location>
</feature>
<feature type="chain" id="PRO_0000028775" description="Stromelysin-3">
    <location>
        <begin position="86"/>
        <end position="477"/>
    </location>
</feature>
<feature type="repeat" description="Hemopexin 1">
    <location>
        <begin position="280"/>
        <end position="324"/>
    </location>
</feature>
<feature type="repeat" description="Hemopexin 2">
    <location>
        <begin position="325"/>
        <end position="369"/>
    </location>
</feature>
<feature type="repeat" description="Hemopexin 3">
    <location>
        <begin position="370"/>
        <end position="418"/>
    </location>
</feature>
<feature type="repeat" description="Hemopexin 4">
    <location>
        <begin position="419"/>
        <end position="466"/>
    </location>
</feature>
<feature type="region of interest" description="Disordered" evidence="4">
    <location>
        <begin position="64"/>
        <end position="83"/>
    </location>
</feature>
<feature type="active site" evidence="3">
    <location>
        <position position="204"/>
    </location>
</feature>
<feature type="binding site" description="in inhibited form">
    <location>
        <position position="65"/>
    </location>
    <ligand>
        <name>Zn(2+)</name>
        <dbReference type="ChEBI" id="CHEBI:29105"/>
        <label>2</label>
        <note>catalytic</note>
    </ligand>
</feature>
<feature type="binding site" evidence="1">
    <location>
        <position position="152"/>
    </location>
    <ligand>
        <name>Zn(2+)</name>
        <dbReference type="ChEBI" id="CHEBI:29105"/>
        <label>1</label>
    </ligand>
</feature>
<feature type="binding site" evidence="1">
    <location>
        <position position="154"/>
    </location>
    <ligand>
        <name>Zn(2+)</name>
        <dbReference type="ChEBI" id="CHEBI:29105"/>
        <label>1</label>
    </ligand>
</feature>
<feature type="binding site" evidence="1">
    <location>
        <position position="159"/>
    </location>
    <ligand>
        <name>Ca(2+)</name>
        <dbReference type="ChEBI" id="CHEBI:29108"/>
    </ligand>
</feature>
<feature type="binding site" evidence="1">
    <location>
        <position position="160"/>
    </location>
    <ligand>
        <name>Ca(2+)</name>
        <dbReference type="ChEBI" id="CHEBI:29108"/>
    </ligand>
</feature>
<feature type="binding site" evidence="1">
    <location>
        <position position="162"/>
    </location>
    <ligand>
        <name>Ca(2+)</name>
        <dbReference type="ChEBI" id="CHEBI:29108"/>
    </ligand>
</feature>
<feature type="binding site" evidence="1">
    <location>
        <position position="164"/>
    </location>
    <ligand>
        <name>Ca(2+)</name>
        <dbReference type="ChEBI" id="CHEBI:29108"/>
    </ligand>
</feature>
<feature type="binding site" evidence="1">
    <location>
        <position position="167"/>
    </location>
    <ligand>
        <name>Zn(2+)</name>
        <dbReference type="ChEBI" id="CHEBI:29105"/>
        <label>1</label>
    </ligand>
</feature>
<feature type="binding site" evidence="1">
    <location>
        <position position="180"/>
    </location>
    <ligand>
        <name>Zn(2+)</name>
        <dbReference type="ChEBI" id="CHEBI:29105"/>
        <label>1</label>
    </ligand>
</feature>
<feature type="binding site">
    <location>
        <position position="203"/>
    </location>
    <ligand>
        <name>Zn(2+)</name>
        <dbReference type="ChEBI" id="CHEBI:29105"/>
        <label>2</label>
        <note>catalytic</note>
    </ligand>
</feature>
<feature type="binding site">
    <location>
        <position position="207"/>
    </location>
    <ligand>
        <name>Zn(2+)</name>
        <dbReference type="ChEBI" id="CHEBI:29105"/>
        <label>2</label>
        <note>catalytic</note>
    </ligand>
</feature>
<feature type="binding site">
    <location>
        <position position="213"/>
    </location>
    <ligand>
        <name>Zn(2+)</name>
        <dbReference type="ChEBI" id="CHEBI:29105"/>
        <label>2</label>
        <note>catalytic</note>
    </ligand>
</feature>
<feature type="disulfide bond" evidence="1">
    <location>
        <begin position="279"/>
        <end position="466"/>
    </location>
</feature>